<keyword id="KW-0997">Cell inner membrane</keyword>
<keyword id="KW-1003">Cell membrane</keyword>
<keyword id="KW-0472">Membrane</keyword>
<keyword id="KW-0808">Transferase</keyword>
<keyword id="KW-0812">Transmembrane</keyword>
<keyword id="KW-1133">Transmembrane helix</keyword>
<sequence>MSYIPFPDISPELFSIELFGVTFALRWYALAYIAGLLIGWRLVLRMIRAERLWSFGPPMTEDQLERLLTWVILGVILGGRLGFVLFYQPAHYLAHPLDILKVWEGGMSFHGGFLGVMTALVAFCLKERISILPVADLLAAATPPGLFLGRIANFINAELWGRPTTLPWGVAFPGEAAQSCPGIEGICARHPSQIYEAGLEGILLFAVLSLLVWRRGWLHWPGSVSGMFLAGYGATRFLVEFVRQPDAQFVSAGNPLGLAWQISGYGLTMGQILSLPMILLGLYLILRSRRTA</sequence>
<accession>A3PG85</accession>
<evidence type="ECO:0000255" key="1">
    <source>
        <dbReference type="HAMAP-Rule" id="MF_01147"/>
    </source>
</evidence>
<protein>
    <recommendedName>
        <fullName evidence="1">Phosphatidylglycerol--prolipoprotein diacylglyceryl transferase</fullName>
        <ecNumber evidence="1">2.5.1.145</ecNumber>
    </recommendedName>
</protein>
<name>LGT_CERS1</name>
<feature type="chain" id="PRO_1000053488" description="Phosphatidylglycerol--prolipoprotein diacylglyceryl transferase">
    <location>
        <begin position="1"/>
        <end position="292"/>
    </location>
</feature>
<feature type="transmembrane region" description="Helical" evidence="1">
    <location>
        <begin position="18"/>
        <end position="38"/>
    </location>
</feature>
<feature type="transmembrane region" description="Helical" evidence="1">
    <location>
        <begin position="67"/>
        <end position="87"/>
    </location>
</feature>
<feature type="transmembrane region" description="Helical" evidence="1">
    <location>
        <begin position="105"/>
        <end position="125"/>
    </location>
</feature>
<feature type="transmembrane region" description="Helical" evidence="1">
    <location>
        <begin position="193"/>
        <end position="213"/>
    </location>
</feature>
<feature type="transmembrane region" description="Helical" evidence="1">
    <location>
        <begin position="222"/>
        <end position="242"/>
    </location>
</feature>
<feature type="transmembrane region" description="Helical" evidence="1">
    <location>
        <begin position="266"/>
        <end position="286"/>
    </location>
</feature>
<feature type="binding site" evidence="1">
    <location>
        <position position="150"/>
    </location>
    <ligand>
        <name>a 1,2-diacyl-sn-glycero-3-phospho-(1'-sn-glycerol)</name>
        <dbReference type="ChEBI" id="CHEBI:64716"/>
    </ligand>
</feature>
<gene>
    <name evidence="1" type="primary">lgt</name>
    <name type="ordered locus">Rsph17029_0232</name>
</gene>
<comment type="function">
    <text evidence="1">Catalyzes the transfer of the diacylglyceryl group from phosphatidylglycerol to the sulfhydryl group of the N-terminal cysteine of a prolipoprotein, the first step in the formation of mature lipoproteins.</text>
</comment>
<comment type="catalytic activity">
    <reaction evidence="1">
        <text>L-cysteinyl-[prolipoprotein] + a 1,2-diacyl-sn-glycero-3-phospho-(1'-sn-glycerol) = an S-1,2-diacyl-sn-glyceryl-L-cysteinyl-[prolipoprotein] + sn-glycerol 1-phosphate + H(+)</text>
        <dbReference type="Rhea" id="RHEA:56712"/>
        <dbReference type="Rhea" id="RHEA-COMP:14679"/>
        <dbReference type="Rhea" id="RHEA-COMP:14680"/>
        <dbReference type="ChEBI" id="CHEBI:15378"/>
        <dbReference type="ChEBI" id="CHEBI:29950"/>
        <dbReference type="ChEBI" id="CHEBI:57685"/>
        <dbReference type="ChEBI" id="CHEBI:64716"/>
        <dbReference type="ChEBI" id="CHEBI:140658"/>
        <dbReference type="EC" id="2.5.1.145"/>
    </reaction>
</comment>
<comment type="pathway">
    <text evidence="1">Protein modification; lipoprotein biosynthesis (diacylglyceryl transfer).</text>
</comment>
<comment type="subcellular location">
    <subcellularLocation>
        <location evidence="1">Cell inner membrane</location>
        <topology evidence="1">Multi-pass membrane protein</topology>
    </subcellularLocation>
</comment>
<comment type="similarity">
    <text evidence="1">Belongs to the Lgt family.</text>
</comment>
<dbReference type="EC" id="2.5.1.145" evidence="1"/>
<dbReference type="EMBL" id="CP000577">
    <property type="protein sequence ID" value="ABN75351.1"/>
    <property type="molecule type" value="Genomic_DNA"/>
</dbReference>
<dbReference type="RefSeq" id="WP_011840257.1">
    <property type="nucleotide sequence ID" value="NC_009049.1"/>
</dbReference>
<dbReference type="SMR" id="A3PG85"/>
<dbReference type="KEGG" id="rsh:Rsph17029_0232"/>
<dbReference type="HOGENOM" id="CLU_013386_1_0_5"/>
<dbReference type="UniPathway" id="UPA00664"/>
<dbReference type="GO" id="GO:0005886">
    <property type="term" value="C:plasma membrane"/>
    <property type="evidence" value="ECO:0007669"/>
    <property type="project" value="UniProtKB-SubCell"/>
</dbReference>
<dbReference type="GO" id="GO:0008961">
    <property type="term" value="F:phosphatidylglycerol-prolipoprotein diacylglyceryl transferase activity"/>
    <property type="evidence" value="ECO:0007669"/>
    <property type="project" value="UniProtKB-UniRule"/>
</dbReference>
<dbReference type="GO" id="GO:0042158">
    <property type="term" value="P:lipoprotein biosynthetic process"/>
    <property type="evidence" value="ECO:0007669"/>
    <property type="project" value="UniProtKB-UniRule"/>
</dbReference>
<dbReference type="HAMAP" id="MF_01147">
    <property type="entry name" value="Lgt"/>
    <property type="match status" value="1"/>
</dbReference>
<dbReference type="InterPro" id="IPR001640">
    <property type="entry name" value="Lgt"/>
</dbReference>
<dbReference type="NCBIfam" id="TIGR00544">
    <property type="entry name" value="lgt"/>
    <property type="match status" value="1"/>
</dbReference>
<dbReference type="PANTHER" id="PTHR30589:SF0">
    <property type="entry name" value="PHOSPHATIDYLGLYCEROL--PROLIPOPROTEIN DIACYLGLYCERYL TRANSFERASE"/>
    <property type="match status" value="1"/>
</dbReference>
<dbReference type="PANTHER" id="PTHR30589">
    <property type="entry name" value="PROLIPOPROTEIN DIACYLGLYCERYL TRANSFERASE"/>
    <property type="match status" value="1"/>
</dbReference>
<dbReference type="Pfam" id="PF01790">
    <property type="entry name" value="LGT"/>
    <property type="match status" value="1"/>
</dbReference>
<dbReference type="PROSITE" id="PS01311">
    <property type="entry name" value="LGT"/>
    <property type="match status" value="1"/>
</dbReference>
<proteinExistence type="inferred from homology"/>
<organism>
    <name type="scientific">Cereibacter sphaeroides (strain ATCC 17029 / ATH 2.4.9)</name>
    <name type="common">Rhodobacter sphaeroides</name>
    <dbReference type="NCBI Taxonomy" id="349101"/>
    <lineage>
        <taxon>Bacteria</taxon>
        <taxon>Pseudomonadati</taxon>
        <taxon>Pseudomonadota</taxon>
        <taxon>Alphaproteobacteria</taxon>
        <taxon>Rhodobacterales</taxon>
        <taxon>Paracoccaceae</taxon>
        <taxon>Cereibacter</taxon>
    </lineage>
</organism>
<reference key="1">
    <citation type="submission" date="2007-02" db="EMBL/GenBank/DDBJ databases">
        <title>Complete sequence of chromosome 1 of Rhodobacter sphaeroides ATCC 17029.</title>
        <authorList>
            <person name="Copeland A."/>
            <person name="Lucas S."/>
            <person name="Lapidus A."/>
            <person name="Barry K."/>
            <person name="Detter J.C."/>
            <person name="Glavina del Rio T."/>
            <person name="Hammon N."/>
            <person name="Israni S."/>
            <person name="Dalin E."/>
            <person name="Tice H."/>
            <person name="Pitluck S."/>
            <person name="Kiss H."/>
            <person name="Brettin T."/>
            <person name="Bruce D."/>
            <person name="Han C."/>
            <person name="Tapia R."/>
            <person name="Gilna P."/>
            <person name="Schmutz J."/>
            <person name="Larimer F."/>
            <person name="Land M."/>
            <person name="Hauser L."/>
            <person name="Kyrpides N."/>
            <person name="Mikhailova N."/>
            <person name="Richardson P."/>
            <person name="Mackenzie C."/>
            <person name="Choudhary M."/>
            <person name="Donohue T.J."/>
            <person name="Kaplan S."/>
        </authorList>
    </citation>
    <scope>NUCLEOTIDE SEQUENCE [LARGE SCALE GENOMIC DNA]</scope>
    <source>
        <strain>ATCC 17029 / ATH 2.4.9</strain>
    </source>
</reference>